<dbReference type="EC" id="4.2.1.59" evidence="1"/>
<dbReference type="EMBL" id="CP000544">
    <property type="protein sequence ID" value="ABM62224.1"/>
    <property type="status" value="ALT_INIT"/>
    <property type="molecule type" value="Genomic_DNA"/>
</dbReference>
<dbReference type="RefSeq" id="WP_041595097.1">
    <property type="nucleotide sequence ID" value="NC_008789.1"/>
</dbReference>
<dbReference type="SMR" id="A1WX12"/>
<dbReference type="STRING" id="349124.Hhal_1457"/>
<dbReference type="KEGG" id="hha:Hhal_1457"/>
<dbReference type="eggNOG" id="COG0764">
    <property type="taxonomic scope" value="Bacteria"/>
</dbReference>
<dbReference type="HOGENOM" id="CLU_078912_1_0_6"/>
<dbReference type="Proteomes" id="UP000000647">
    <property type="component" value="Chromosome"/>
</dbReference>
<dbReference type="GO" id="GO:0005737">
    <property type="term" value="C:cytoplasm"/>
    <property type="evidence" value="ECO:0007669"/>
    <property type="project" value="UniProtKB-SubCell"/>
</dbReference>
<dbReference type="GO" id="GO:0016020">
    <property type="term" value="C:membrane"/>
    <property type="evidence" value="ECO:0007669"/>
    <property type="project" value="GOC"/>
</dbReference>
<dbReference type="GO" id="GO:0019171">
    <property type="term" value="F:(3R)-hydroxyacyl-[acyl-carrier-protein] dehydratase activity"/>
    <property type="evidence" value="ECO:0007669"/>
    <property type="project" value="UniProtKB-EC"/>
</dbReference>
<dbReference type="GO" id="GO:0006633">
    <property type="term" value="P:fatty acid biosynthetic process"/>
    <property type="evidence" value="ECO:0007669"/>
    <property type="project" value="UniProtKB-UniRule"/>
</dbReference>
<dbReference type="GO" id="GO:0009245">
    <property type="term" value="P:lipid A biosynthetic process"/>
    <property type="evidence" value="ECO:0007669"/>
    <property type="project" value="UniProtKB-UniRule"/>
</dbReference>
<dbReference type="CDD" id="cd01288">
    <property type="entry name" value="FabZ"/>
    <property type="match status" value="1"/>
</dbReference>
<dbReference type="FunFam" id="3.10.129.10:FF:000001">
    <property type="entry name" value="3-hydroxyacyl-[acyl-carrier-protein] dehydratase FabZ"/>
    <property type="match status" value="1"/>
</dbReference>
<dbReference type="Gene3D" id="3.10.129.10">
    <property type="entry name" value="Hotdog Thioesterase"/>
    <property type="match status" value="1"/>
</dbReference>
<dbReference type="HAMAP" id="MF_00406">
    <property type="entry name" value="FabZ"/>
    <property type="match status" value="1"/>
</dbReference>
<dbReference type="InterPro" id="IPR013114">
    <property type="entry name" value="FabA_FabZ"/>
</dbReference>
<dbReference type="InterPro" id="IPR010084">
    <property type="entry name" value="FabZ"/>
</dbReference>
<dbReference type="InterPro" id="IPR029069">
    <property type="entry name" value="HotDog_dom_sf"/>
</dbReference>
<dbReference type="NCBIfam" id="TIGR01750">
    <property type="entry name" value="fabZ"/>
    <property type="match status" value="1"/>
</dbReference>
<dbReference type="NCBIfam" id="NF000582">
    <property type="entry name" value="PRK00006.1"/>
    <property type="match status" value="1"/>
</dbReference>
<dbReference type="PANTHER" id="PTHR30272">
    <property type="entry name" value="3-HYDROXYACYL-[ACYL-CARRIER-PROTEIN] DEHYDRATASE"/>
    <property type="match status" value="1"/>
</dbReference>
<dbReference type="PANTHER" id="PTHR30272:SF1">
    <property type="entry name" value="3-HYDROXYACYL-[ACYL-CARRIER-PROTEIN] DEHYDRATASE"/>
    <property type="match status" value="1"/>
</dbReference>
<dbReference type="Pfam" id="PF07977">
    <property type="entry name" value="FabA"/>
    <property type="match status" value="1"/>
</dbReference>
<dbReference type="SUPFAM" id="SSF54637">
    <property type="entry name" value="Thioesterase/thiol ester dehydrase-isomerase"/>
    <property type="match status" value="1"/>
</dbReference>
<keyword id="KW-0963">Cytoplasm</keyword>
<keyword id="KW-0441">Lipid A biosynthesis</keyword>
<keyword id="KW-0444">Lipid biosynthesis</keyword>
<keyword id="KW-0443">Lipid metabolism</keyword>
<keyword id="KW-0456">Lyase</keyword>
<keyword id="KW-1185">Reference proteome</keyword>
<feature type="chain" id="PRO_0000340781" description="3-hydroxyacyl-[acyl-carrier-protein] dehydratase FabZ">
    <location>
        <begin position="1"/>
        <end position="153"/>
    </location>
</feature>
<feature type="active site" evidence="1">
    <location>
        <position position="56"/>
    </location>
</feature>
<evidence type="ECO:0000255" key="1">
    <source>
        <dbReference type="HAMAP-Rule" id="MF_00406"/>
    </source>
</evidence>
<evidence type="ECO:0000305" key="2"/>
<proteinExistence type="inferred from homology"/>
<comment type="function">
    <text evidence="1">Involved in unsaturated fatty acids biosynthesis. Catalyzes the dehydration of short chain beta-hydroxyacyl-ACPs and long chain saturated and unsaturated beta-hydroxyacyl-ACPs.</text>
</comment>
<comment type="catalytic activity">
    <reaction evidence="1">
        <text>a (3R)-hydroxyacyl-[ACP] = a (2E)-enoyl-[ACP] + H2O</text>
        <dbReference type="Rhea" id="RHEA:13097"/>
        <dbReference type="Rhea" id="RHEA-COMP:9925"/>
        <dbReference type="Rhea" id="RHEA-COMP:9945"/>
        <dbReference type="ChEBI" id="CHEBI:15377"/>
        <dbReference type="ChEBI" id="CHEBI:78784"/>
        <dbReference type="ChEBI" id="CHEBI:78827"/>
        <dbReference type="EC" id="4.2.1.59"/>
    </reaction>
</comment>
<comment type="subcellular location">
    <subcellularLocation>
        <location evidence="1">Cytoplasm</location>
    </subcellularLocation>
</comment>
<comment type="similarity">
    <text evidence="1">Belongs to the thioester dehydratase family. FabZ subfamily.</text>
</comment>
<comment type="sequence caution" evidence="2">
    <conflict type="erroneous initiation">
        <sequence resource="EMBL-CDS" id="ABM62224"/>
    </conflict>
</comment>
<name>FABZ_HALHL</name>
<accession>A1WX12</accession>
<protein>
    <recommendedName>
        <fullName evidence="1">3-hydroxyacyl-[acyl-carrier-protein] dehydratase FabZ</fullName>
        <ecNumber evidence="1">4.2.1.59</ecNumber>
    </recommendedName>
    <alternativeName>
        <fullName evidence="1">(3R)-hydroxymyristoyl-[acyl-carrier-protein] dehydratase</fullName>
        <shortName evidence="1">(3R)-hydroxymyristoyl-ACP dehydrase</shortName>
    </alternativeName>
    <alternativeName>
        <fullName evidence="1">Beta-hydroxyacyl-ACP dehydratase</fullName>
    </alternativeName>
</protein>
<reference key="1">
    <citation type="submission" date="2006-12" db="EMBL/GenBank/DDBJ databases">
        <title>Complete sequence of Halorhodospira halophila SL1.</title>
        <authorList>
            <consortium name="US DOE Joint Genome Institute"/>
            <person name="Copeland A."/>
            <person name="Lucas S."/>
            <person name="Lapidus A."/>
            <person name="Barry K."/>
            <person name="Detter J.C."/>
            <person name="Glavina del Rio T."/>
            <person name="Hammon N."/>
            <person name="Israni S."/>
            <person name="Dalin E."/>
            <person name="Tice H."/>
            <person name="Pitluck S."/>
            <person name="Saunders E."/>
            <person name="Brettin T."/>
            <person name="Bruce D."/>
            <person name="Han C."/>
            <person name="Tapia R."/>
            <person name="Schmutz J."/>
            <person name="Larimer F."/>
            <person name="Land M."/>
            <person name="Hauser L."/>
            <person name="Kyrpides N."/>
            <person name="Mikhailova N."/>
            <person name="Hoff W."/>
            <person name="Richardson P."/>
        </authorList>
    </citation>
    <scope>NUCLEOTIDE SEQUENCE [LARGE SCALE GENOMIC DNA]</scope>
    <source>
        <strain>DSM 244 / SL1</strain>
    </source>
</reference>
<gene>
    <name evidence="1" type="primary">fabZ</name>
    <name type="ordered locus">Hhal_1457</name>
</gene>
<organism>
    <name type="scientific">Halorhodospira halophila (strain DSM 244 / SL1)</name>
    <name type="common">Ectothiorhodospira halophila (strain DSM 244 / SL1)</name>
    <dbReference type="NCBI Taxonomy" id="349124"/>
    <lineage>
        <taxon>Bacteria</taxon>
        <taxon>Pseudomonadati</taxon>
        <taxon>Pseudomonadota</taxon>
        <taxon>Gammaproteobacteria</taxon>
        <taxon>Chromatiales</taxon>
        <taxon>Ectothiorhodospiraceae</taxon>
        <taxon>Halorhodospira</taxon>
    </lineage>
</organism>
<sequence>MSERDAQGATDIEGIMNLLPHRYPLLLIDRVLDFQPHEHLASIKNVTINEPFFVGHFPQKPVMPGVLILESLAQACGMLAFKSVQDTLTDNDVLYLVGIDKARFKRPVQPGDQLRHDVSVRRVTRGIWIFEARGSVDGELAAECEIRCTVRTV</sequence>